<comment type="function">
    <text evidence="1">Nucleotidase that shows phosphatase activity on nucleoside 5'-monophosphates.</text>
</comment>
<comment type="catalytic activity">
    <reaction evidence="1">
        <text>a ribonucleoside 5'-phosphate + H2O = a ribonucleoside + phosphate</text>
        <dbReference type="Rhea" id="RHEA:12484"/>
        <dbReference type="ChEBI" id="CHEBI:15377"/>
        <dbReference type="ChEBI" id="CHEBI:18254"/>
        <dbReference type="ChEBI" id="CHEBI:43474"/>
        <dbReference type="ChEBI" id="CHEBI:58043"/>
        <dbReference type="EC" id="3.1.3.5"/>
    </reaction>
</comment>
<comment type="cofactor">
    <cofactor evidence="1">
        <name>a divalent metal cation</name>
        <dbReference type="ChEBI" id="CHEBI:60240"/>
    </cofactor>
    <text evidence="1">Binds 1 divalent metal cation per subunit.</text>
</comment>
<comment type="subcellular location">
    <subcellularLocation>
        <location evidence="1">Cytoplasm</location>
    </subcellularLocation>
</comment>
<comment type="similarity">
    <text evidence="1">Belongs to the SurE nucleotidase family.</text>
</comment>
<keyword id="KW-0963">Cytoplasm</keyword>
<keyword id="KW-0378">Hydrolase</keyword>
<keyword id="KW-0479">Metal-binding</keyword>
<keyword id="KW-0547">Nucleotide-binding</keyword>
<name>SURE_CYAP4</name>
<feature type="chain" id="PRO_1000196591" description="5'-nucleotidase SurE">
    <location>
        <begin position="1"/>
        <end position="270"/>
    </location>
</feature>
<feature type="binding site" evidence="1">
    <location>
        <position position="8"/>
    </location>
    <ligand>
        <name>a divalent metal cation</name>
        <dbReference type="ChEBI" id="CHEBI:60240"/>
    </ligand>
</feature>
<feature type="binding site" evidence="1">
    <location>
        <position position="9"/>
    </location>
    <ligand>
        <name>a divalent metal cation</name>
        <dbReference type="ChEBI" id="CHEBI:60240"/>
    </ligand>
</feature>
<feature type="binding site" evidence="1">
    <location>
        <position position="40"/>
    </location>
    <ligand>
        <name>a divalent metal cation</name>
        <dbReference type="ChEBI" id="CHEBI:60240"/>
    </ligand>
</feature>
<feature type="binding site" evidence="1">
    <location>
        <position position="98"/>
    </location>
    <ligand>
        <name>a divalent metal cation</name>
        <dbReference type="ChEBI" id="CHEBI:60240"/>
    </ligand>
</feature>
<organism>
    <name type="scientific">Cyanothece sp. (strain PCC 7425 / ATCC 29141)</name>
    <dbReference type="NCBI Taxonomy" id="395961"/>
    <lineage>
        <taxon>Bacteria</taxon>
        <taxon>Bacillati</taxon>
        <taxon>Cyanobacteriota</taxon>
        <taxon>Cyanophyceae</taxon>
        <taxon>Gomontiellales</taxon>
        <taxon>Cyanothecaceae</taxon>
        <taxon>Cyanothece</taxon>
    </lineage>
</organism>
<accession>B8HSQ9</accession>
<sequence length="270" mass="29145">MKLLLSNDDGIFSPGIRTLADTLAAAGHEVMVVCPDRERSATGHGLTLFDPIRAEAVASLFHPSVKAWACSGTPSDCIKLALGALLDSLPDFVLSGINQGSNLGTDILYSGTVSAAMEGVIEGIPSMALSLTSFTVREFQPAANFARDLLAKLDHTPLPEAMLLNINVPALPAAEIAGVAITRQGIRRYHDMFKKRVDPRGKTYYWLAGEVLEDVNDPEQGVDSEMLTDVQAIRENLITITPLKYNLTHTPGLQTLSTWLNLPLLLQTDP</sequence>
<dbReference type="EC" id="3.1.3.5" evidence="1"/>
<dbReference type="EMBL" id="CP001344">
    <property type="protein sequence ID" value="ACL46042.1"/>
    <property type="molecule type" value="Genomic_DNA"/>
</dbReference>
<dbReference type="SMR" id="B8HSQ9"/>
<dbReference type="STRING" id="395961.Cyan7425_3723"/>
<dbReference type="KEGG" id="cyn:Cyan7425_3723"/>
<dbReference type="eggNOG" id="COG0496">
    <property type="taxonomic scope" value="Bacteria"/>
</dbReference>
<dbReference type="HOGENOM" id="CLU_045192_1_3_3"/>
<dbReference type="OrthoDB" id="9780815at2"/>
<dbReference type="GO" id="GO:0005737">
    <property type="term" value="C:cytoplasm"/>
    <property type="evidence" value="ECO:0007669"/>
    <property type="project" value="UniProtKB-SubCell"/>
</dbReference>
<dbReference type="GO" id="GO:0008254">
    <property type="term" value="F:3'-nucleotidase activity"/>
    <property type="evidence" value="ECO:0007669"/>
    <property type="project" value="TreeGrafter"/>
</dbReference>
<dbReference type="GO" id="GO:0008253">
    <property type="term" value="F:5'-nucleotidase activity"/>
    <property type="evidence" value="ECO:0007669"/>
    <property type="project" value="UniProtKB-UniRule"/>
</dbReference>
<dbReference type="GO" id="GO:0004309">
    <property type="term" value="F:exopolyphosphatase activity"/>
    <property type="evidence" value="ECO:0007669"/>
    <property type="project" value="TreeGrafter"/>
</dbReference>
<dbReference type="GO" id="GO:0046872">
    <property type="term" value="F:metal ion binding"/>
    <property type="evidence" value="ECO:0007669"/>
    <property type="project" value="UniProtKB-UniRule"/>
</dbReference>
<dbReference type="GO" id="GO:0000166">
    <property type="term" value="F:nucleotide binding"/>
    <property type="evidence" value="ECO:0007669"/>
    <property type="project" value="UniProtKB-KW"/>
</dbReference>
<dbReference type="FunFam" id="3.40.1210.10:FF:000001">
    <property type="entry name" value="5'/3'-nucleotidase SurE"/>
    <property type="match status" value="1"/>
</dbReference>
<dbReference type="Gene3D" id="3.40.1210.10">
    <property type="entry name" value="Survival protein SurE-like phosphatase/nucleotidase"/>
    <property type="match status" value="1"/>
</dbReference>
<dbReference type="HAMAP" id="MF_00060">
    <property type="entry name" value="SurE"/>
    <property type="match status" value="1"/>
</dbReference>
<dbReference type="InterPro" id="IPR030048">
    <property type="entry name" value="SurE"/>
</dbReference>
<dbReference type="InterPro" id="IPR002828">
    <property type="entry name" value="SurE-like_Pase/nucleotidase"/>
</dbReference>
<dbReference type="InterPro" id="IPR036523">
    <property type="entry name" value="SurE-like_sf"/>
</dbReference>
<dbReference type="NCBIfam" id="NF001490">
    <property type="entry name" value="PRK00346.1-4"/>
    <property type="match status" value="1"/>
</dbReference>
<dbReference type="NCBIfam" id="NF001492">
    <property type="entry name" value="PRK00346.2-2"/>
    <property type="match status" value="1"/>
</dbReference>
<dbReference type="NCBIfam" id="TIGR00087">
    <property type="entry name" value="surE"/>
    <property type="match status" value="1"/>
</dbReference>
<dbReference type="PANTHER" id="PTHR30457">
    <property type="entry name" value="5'-NUCLEOTIDASE SURE"/>
    <property type="match status" value="1"/>
</dbReference>
<dbReference type="PANTHER" id="PTHR30457:SF12">
    <property type="entry name" value="5'_3'-NUCLEOTIDASE SURE"/>
    <property type="match status" value="1"/>
</dbReference>
<dbReference type="Pfam" id="PF01975">
    <property type="entry name" value="SurE"/>
    <property type="match status" value="1"/>
</dbReference>
<dbReference type="SUPFAM" id="SSF64167">
    <property type="entry name" value="SurE-like"/>
    <property type="match status" value="1"/>
</dbReference>
<evidence type="ECO:0000255" key="1">
    <source>
        <dbReference type="HAMAP-Rule" id="MF_00060"/>
    </source>
</evidence>
<gene>
    <name evidence="1" type="primary">surE</name>
    <name type="ordered locus">Cyan7425_3723</name>
</gene>
<reference key="1">
    <citation type="journal article" date="2011" name="MBio">
        <title>Novel metabolic attributes of the genus Cyanothece, comprising a group of unicellular nitrogen-fixing Cyanobacteria.</title>
        <authorList>
            <person name="Bandyopadhyay A."/>
            <person name="Elvitigala T."/>
            <person name="Welsh E."/>
            <person name="Stockel J."/>
            <person name="Liberton M."/>
            <person name="Min H."/>
            <person name="Sherman L.A."/>
            <person name="Pakrasi H.B."/>
        </authorList>
    </citation>
    <scope>NUCLEOTIDE SEQUENCE [LARGE SCALE GENOMIC DNA]</scope>
    <source>
        <strain>PCC 7425 / ATCC 29141</strain>
    </source>
</reference>
<protein>
    <recommendedName>
        <fullName evidence="1">5'-nucleotidase SurE</fullName>
        <ecNumber evidence="1">3.1.3.5</ecNumber>
    </recommendedName>
    <alternativeName>
        <fullName evidence="1">Nucleoside 5'-monophosphate phosphohydrolase</fullName>
    </alternativeName>
</protein>
<proteinExistence type="inferred from homology"/>